<organism>
    <name type="scientific">Colwellia psychrerythraea (strain 34H / ATCC BAA-681)</name>
    <name type="common">Vibrio psychroerythus</name>
    <dbReference type="NCBI Taxonomy" id="167879"/>
    <lineage>
        <taxon>Bacteria</taxon>
        <taxon>Pseudomonadati</taxon>
        <taxon>Pseudomonadota</taxon>
        <taxon>Gammaproteobacteria</taxon>
        <taxon>Alteromonadales</taxon>
        <taxon>Colwelliaceae</taxon>
        <taxon>Colwellia</taxon>
    </lineage>
</organism>
<gene>
    <name evidence="1" type="primary">metG</name>
    <name type="ordered locus">CPS_2839</name>
</gene>
<dbReference type="EC" id="6.1.1.10" evidence="1"/>
<dbReference type="EMBL" id="CP000083">
    <property type="protein sequence ID" value="AAZ27317.1"/>
    <property type="molecule type" value="Genomic_DNA"/>
</dbReference>
<dbReference type="RefSeq" id="WP_011043638.1">
    <property type="nucleotide sequence ID" value="NC_003910.7"/>
</dbReference>
<dbReference type="SMR" id="Q480H5"/>
<dbReference type="STRING" id="167879.CPS_2839"/>
<dbReference type="KEGG" id="cps:CPS_2839"/>
<dbReference type="eggNOG" id="COG0073">
    <property type="taxonomic scope" value="Bacteria"/>
</dbReference>
<dbReference type="eggNOG" id="COG0143">
    <property type="taxonomic scope" value="Bacteria"/>
</dbReference>
<dbReference type="HOGENOM" id="CLU_009710_7_0_6"/>
<dbReference type="Proteomes" id="UP000000547">
    <property type="component" value="Chromosome"/>
</dbReference>
<dbReference type="GO" id="GO:0005829">
    <property type="term" value="C:cytosol"/>
    <property type="evidence" value="ECO:0007669"/>
    <property type="project" value="TreeGrafter"/>
</dbReference>
<dbReference type="GO" id="GO:0005524">
    <property type="term" value="F:ATP binding"/>
    <property type="evidence" value="ECO:0007669"/>
    <property type="project" value="UniProtKB-UniRule"/>
</dbReference>
<dbReference type="GO" id="GO:0046872">
    <property type="term" value="F:metal ion binding"/>
    <property type="evidence" value="ECO:0007669"/>
    <property type="project" value="UniProtKB-KW"/>
</dbReference>
<dbReference type="GO" id="GO:0004825">
    <property type="term" value="F:methionine-tRNA ligase activity"/>
    <property type="evidence" value="ECO:0007669"/>
    <property type="project" value="UniProtKB-UniRule"/>
</dbReference>
<dbReference type="GO" id="GO:0000049">
    <property type="term" value="F:tRNA binding"/>
    <property type="evidence" value="ECO:0007669"/>
    <property type="project" value="UniProtKB-KW"/>
</dbReference>
<dbReference type="GO" id="GO:0006431">
    <property type="term" value="P:methionyl-tRNA aminoacylation"/>
    <property type="evidence" value="ECO:0007669"/>
    <property type="project" value="UniProtKB-UniRule"/>
</dbReference>
<dbReference type="CDD" id="cd07957">
    <property type="entry name" value="Anticodon_Ia_Met"/>
    <property type="match status" value="1"/>
</dbReference>
<dbReference type="CDD" id="cd00814">
    <property type="entry name" value="MetRS_core"/>
    <property type="match status" value="1"/>
</dbReference>
<dbReference type="CDD" id="cd02800">
    <property type="entry name" value="tRNA_bind_EcMetRS_like"/>
    <property type="match status" value="1"/>
</dbReference>
<dbReference type="FunFam" id="1.10.730.10:FF:000005">
    <property type="entry name" value="Methionine--tRNA ligase"/>
    <property type="match status" value="1"/>
</dbReference>
<dbReference type="FunFam" id="2.20.28.20:FF:000001">
    <property type="entry name" value="Methionine--tRNA ligase"/>
    <property type="match status" value="1"/>
</dbReference>
<dbReference type="FunFam" id="2.40.50.140:FF:000042">
    <property type="entry name" value="Methionine--tRNA ligase"/>
    <property type="match status" value="1"/>
</dbReference>
<dbReference type="Gene3D" id="3.40.50.620">
    <property type="entry name" value="HUPs"/>
    <property type="match status" value="1"/>
</dbReference>
<dbReference type="Gene3D" id="1.10.730.10">
    <property type="entry name" value="Isoleucyl-tRNA Synthetase, Domain 1"/>
    <property type="match status" value="1"/>
</dbReference>
<dbReference type="Gene3D" id="2.20.28.20">
    <property type="entry name" value="Methionyl-tRNA synthetase, Zn-domain"/>
    <property type="match status" value="1"/>
</dbReference>
<dbReference type="Gene3D" id="2.40.50.140">
    <property type="entry name" value="Nucleic acid-binding proteins"/>
    <property type="match status" value="1"/>
</dbReference>
<dbReference type="HAMAP" id="MF_00098">
    <property type="entry name" value="Met_tRNA_synth_type1"/>
    <property type="match status" value="1"/>
</dbReference>
<dbReference type="InterPro" id="IPR001412">
    <property type="entry name" value="aa-tRNA-synth_I_CS"/>
</dbReference>
<dbReference type="InterPro" id="IPR041872">
    <property type="entry name" value="Anticodon_Met"/>
</dbReference>
<dbReference type="InterPro" id="IPR004495">
    <property type="entry name" value="Met-tRNA-synth_bsu_C"/>
</dbReference>
<dbReference type="InterPro" id="IPR023458">
    <property type="entry name" value="Met-tRNA_ligase_1"/>
</dbReference>
<dbReference type="InterPro" id="IPR014758">
    <property type="entry name" value="Met-tRNA_synth"/>
</dbReference>
<dbReference type="InterPro" id="IPR015413">
    <property type="entry name" value="Methionyl/Leucyl_tRNA_Synth"/>
</dbReference>
<dbReference type="InterPro" id="IPR033911">
    <property type="entry name" value="MetRS_core"/>
</dbReference>
<dbReference type="InterPro" id="IPR029038">
    <property type="entry name" value="MetRS_Zn"/>
</dbReference>
<dbReference type="InterPro" id="IPR012340">
    <property type="entry name" value="NA-bd_OB-fold"/>
</dbReference>
<dbReference type="InterPro" id="IPR014729">
    <property type="entry name" value="Rossmann-like_a/b/a_fold"/>
</dbReference>
<dbReference type="InterPro" id="IPR002547">
    <property type="entry name" value="tRNA-bd_dom"/>
</dbReference>
<dbReference type="InterPro" id="IPR009080">
    <property type="entry name" value="tRNAsynth_Ia_anticodon-bd"/>
</dbReference>
<dbReference type="NCBIfam" id="TIGR00398">
    <property type="entry name" value="metG"/>
    <property type="match status" value="1"/>
</dbReference>
<dbReference type="NCBIfam" id="TIGR00399">
    <property type="entry name" value="metG_C_term"/>
    <property type="match status" value="1"/>
</dbReference>
<dbReference type="NCBIfam" id="NF001100">
    <property type="entry name" value="PRK00133.1"/>
    <property type="match status" value="1"/>
</dbReference>
<dbReference type="PANTHER" id="PTHR45765">
    <property type="entry name" value="METHIONINE--TRNA LIGASE"/>
    <property type="match status" value="1"/>
</dbReference>
<dbReference type="PANTHER" id="PTHR45765:SF1">
    <property type="entry name" value="METHIONINE--TRNA LIGASE, CYTOPLASMIC"/>
    <property type="match status" value="1"/>
</dbReference>
<dbReference type="Pfam" id="PF19303">
    <property type="entry name" value="Anticodon_3"/>
    <property type="match status" value="1"/>
</dbReference>
<dbReference type="Pfam" id="PF09334">
    <property type="entry name" value="tRNA-synt_1g"/>
    <property type="match status" value="1"/>
</dbReference>
<dbReference type="Pfam" id="PF01588">
    <property type="entry name" value="tRNA_bind"/>
    <property type="match status" value="1"/>
</dbReference>
<dbReference type="PRINTS" id="PR01041">
    <property type="entry name" value="TRNASYNTHMET"/>
</dbReference>
<dbReference type="SUPFAM" id="SSF47323">
    <property type="entry name" value="Anticodon-binding domain of a subclass of class I aminoacyl-tRNA synthetases"/>
    <property type="match status" value="1"/>
</dbReference>
<dbReference type="SUPFAM" id="SSF57770">
    <property type="entry name" value="Methionyl-tRNA synthetase (MetRS), Zn-domain"/>
    <property type="match status" value="1"/>
</dbReference>
<dbReference type="SUPFAM" id="SSF50249">
    <property type="entry name" value="Nucleic acid-binding proteins"/>
    <property type="match status" value="1"/>
</dbReference>
<dbReference type="SUPFAM" id="SSF52374">
    <property type="entry name" value="Nucleotidylyl transferase"/>
    <property type="match status" value="1"/>
</dbReference>
<dbReference type="PROSITE" id="PS00178">
    <property type="entry name" value="AA_TRNA_LIGASE_I"/>
    <property type="match status" value="1"/>
</dbReference>
<dbReference type="PROSITE" id="PS50886">
    <property type="entry name" value="TRBD"/>
    <property type="match status" value="1"/>
</dbReference>
<name>SYM_COLP3</name>
<sequence length="713" mass="80340">MSDTTLSEATSNTASHSLAEKRKILVTCALPYANGSIHLGHMLEHIQTDIWVRFQRMRGHETYFVCADDAHGTPIMLKAQELGITPEEMINGVREERIKEFSDFHISFDNYHTTHSDENKEYSEKIYNALHAKGHIKTRIISQLYDPEKGMFLADRFVKGTCPKCKSEDENGDSCDNCGATYSPTEVLNPRSAISGATPILKDSEHYFFDLPAFETMLSDWIRSGALQEEVANKLTEWFEQGLKQWDISRDAPYFGFEIPNAPGKFFYVWLDAPIGYMGSFKNLCDKDSTIDFDSFWNKNSDAELYHFIGKDIINFHSLFWPAMLEGADFRKPTAVFAHGFVTVNGEKMSKSKGTFIKGRTYLDHLNPEYLRYYYATKLTHKIDDLDLNLEDFVQRVNSDLVGKVVNIASRCASFITKRFDGMLSTNIDDQALADEVMAAGDSIAAHYESRDFGRGMREIMALADKVNEYIAIKEPWQLVKDETKQQEVQDICSLGINMFRTLMIYLKPVLPVLADSTAAFLNDELVWEGHKTLLTDHKINKFKALLQRVDMDKVNAMTDASKDSLGAPVEEEKKPAKKKKAAKVVDNSAALADPLAADPISEEIEFDDFAKIDLRIVKIINAEHVEKADKLIQLTLALNEEGTETRQVFAGIKSAYNPEDLIGKHTVMVANLAPRKMRFGMSEGMVLAAGPGDKDLWILNPDDGAKAGMRVK</sequence>
<proteinExistence type="inferred from homology"/>
<accession>Q480H5</accession>
<protein>
    <recommendedName>
        <fullName evidence="1">Methionine--tRNA ligase</fullName>
        <ecNumber evidence="1">6.1.1.10</ecNumber>
    </recommendedName>
    <alternativeName>
        <fullName evidence="1">Methionyl-tRNA synthetase</fullName>
        <shortName evidence="1">MetRS</shortName>
    </alternativeName>
</protein>
<evidence type="ECO:0000255" key="1">
    <source>
        <dbReference type="HAMAP-Rule" id="MF_00098"/>
    </source>
</evidence>
<keyword id="KW-0030">Aminoacyl-tRNA synthetase</keyword>
<keyword id="KW-0067">ATP-binding</keyword>
<keyword id="KW-0963">Cytoplasm</keyword>
<keyword id="KW-0436">Ligase</keyword>
<keyword id="KW-0479">Metal-binding</keyword>
<keyword id="KW-0547">Nucleotide-binding</keyword>
<keyword id="KW-0648">Protein biosynthesis</keyword>
<keyword id="KW-0694">RNA-binding</keyword>
<keyword id="KW-0820">tRNA-binding</keyword>
<keyword id="KW-0862">Zinc</keyword>
<feature type="chain" id="PRO_0000331806" description="Methionine--tRNA ligase">
    <location>
        <begin position="1"/>
        <end position="713"/>
    </location>
</feature>
<feature type="domain" description="tRNA-binding" evidence="1">
    <location>
        <begin position="609"/>
        <end position="713"/>
    </location>
</feature>
<feature type="short sequence motif" description="'HIGH' region">
    <location>
        <begin position="31"/>
        <end position="41"/>
    </location>
</feature>
<feature type="short sequence motif" description="'KMSKS' region">
    <location>
        <begin position="348"/>
        <end position="352"/>
    </location>
</feature>
<feature type="binding site" evidence="1">
    <location>
        <position position="162"/>
    </location>
    <ligand>
        <name>Zn(2+)</name>
        <dbReference type="ChEBI" id="CHEBI:29105"/>
    </ligand>
</feature>
<feature type="binding site" evidence="1">
    <location>
        <position position="165"/>
    </location>
    <ligand>
        <name>Zn(2+)</name>
        <dbReference type="ChEBI" id="CHEBI:29105"/>
    </ligand>
</feature>
<feature type="binding site" evidence="1">
    <location>
        <position position="175"/>
    </location>
    <ligand>
        <name>Zn(2+)</name>
        <dbReference type="ChEBI" id="CHEBI:29105"/>
    </ligand>
</feature>
<feature type="binding site" evidence="1">
    <location>
        <position position="178"/>
    </location>
    <ligand>
        <name>Zn(2+)</name>
        <dbReference type="ChEBI" id="CHEBI:29105"/>
    </ligand>
</feature>
<feature type="binding site" evidence="1">
    <location>
        <position position="351"/>
    </location>
    <ligand>
        <name>ATP</name>
        <dbReference type="ChEBI" id="CHEBI:30616"/>
    </ligand>
</feature>
<reference key="1">
    <citation type="journal article" date="2005" name="Proc. Natl. Acad. Sci. U.S.A.">
        <title>The psychrophilic lifestyle as revealed by the genome sequence of Colwellia psychrerythraea 34H through genomic and proteomic analyses.</title>
        <authorList>
            <person name="Methe B.A."/>
            <person name="Nelson K.E."/>
            <person name="Deming J.W."/>
            <person name="Momen B."/>
            <person name="Melamud E."/>
            <person name="Zhang X."/>
            <person name="Moult J."/>
            <person name="Madupu R."/>
            <person name="Nelson W.C."/>
            <person name="Dodson R.J."/>
            <person name="Brinkac L.M."/>
            <person name="Daugherty S.C."/>
            <person name="Durkin A.S."/>
            <person name="DeBoy R.T."/>
            <person name="Kolonay J.F."/>
            <person name="Sullivan S.A."/>
            <person name="Zhou L."/>
            <person name="Davidsen T.M."/>
            <person name="Wu M."/>
            <person name="Huston A.L."/>
            <person name="Lewis M."/>
            <person name="Weaver B."/>
            <person name="Weidman J.F."/>
            <person name="Khouri H."/>
            <person name="Utterback T.R."/>
            <person name="Feldblyum T.V."/>
            <person name="Fraser C.M."/>
        </authorList>
    </citation>
    <scope>NUCLEOTIDE SEQUENCE [LARGE SCALE GENOMIC DNA]</scope>
    <source>
        <strain>34H / ATCC BAA-681</strain>
    </source>
</reference>
<comment type="function">
    <text evidence="1">Is required not only for elongation of protein synthesis but also for the initiation of all mRNA translation through initiator tRNA(fMet) aminoacylation.</text>
</comment>
<comment type="catalytic activity">
    <reaction evidence="1">
        <text>tRNA(Met) + L-methionine + ATP = L-methionyl-tRNA(Met) + AMP + diphosphate</text>
        <dbReference type="Rhea" id="RHEA:13481"/>
        <dbReference type="Rhea" id="RHEA-COMP:9667"/>
        <dbReference type="Rhea" id="RHEA-COMP:9698"/>
        <dbReference type="ChEBI" id="CHEBI:30616"/>
        <dbReference type="ChEBI" id="CHEBI:33019"/>
        <dbReference type="ChEBI" id="CHEBI:57844"/>
        <dbReference type="ChEBI" id="CHEBI:78442"/>
        <dbReference type="ChEBI" id="CHEBI:78530"/>
        <dbReference type="ChEBI" id="CHEBI:456215"/>
        <dbReference type="EC" id="6.1.1.10"/>
    </reaction>
</comment>
<comment type="cofactor">
    <cofactor evidence="1">
        <name>Zn(2+)</name>
        <dbReference type="ChEBI" id="CHEBI:29105"/>
    </cofactor>
    <text evidence="1">Binds 1 zinc ion per subunit.</text>
</comment>
<comment type="subunit">
    <text evidence="1">Homodimer.</text>
</comment>
<comment type="subcellular location">
    <subcellularLocation>
        <location evidence="1">Cytoplasm</location>
    </subcellularLocation>
</comment>
<comment type="similarity">
    <text evidence="1">Belongs to the class-I aminoacyl-tRNA synthetase family. MetG type 1 subfamily.</text>
</comment>